<sequence length="305" mass="33817">MFDSDKNSILQSDFCQRLVVHSLLLVFLVILLCTSLYPSSAFIVGLLSSTCAAIGTYEMSSMVRMKFPFSFTRYSSIGSAIFVALTCLTARCKMLLPEHVDLIPWFFLFFWTVHLVFKSRHYKLGPIGSTGLALFCMLYVSVPIRLFLHILYGFVHTDTPFIGIWWAIFLIATTKSSDIFGYFFGKAFGKKRIAPVISPNKTVVGFVAGCIASILVSLIFYSHLPKSFANQIAMPWILVALGIILGISGFFGDIIESTFKRDAQIKNSSDLESIGGMLDVLDSLLLSTPIVYAILLITQNGTFLG</sequence>
<organism>
    <name type="scientific">Chlamydia muridarum (strain MoPn / Nigg)</name>
    <dbReference type="NCBI Taxonomy" id="243161"/>
    <lineage>
        <taxon>Bacteria</taxon>
        <taxon>Pseudomonadati</taxon>
        <taxon>Chlamydiota</taxon>
        <taxon>Chlamydiia</taxon>
        <taxon>Chlamydiales</taxon>
        <taxon>Chlamydiaceae</taxon>
        <taxon>Chlamydia/Chlamydophila group</taxon>
        <taxon>Chlamydia</taxon>
    </lineage>
</organism>
<reference key="1">
    <citation type="journal article" date="2000" name="Nucleic Acids Res.">
        <title>Genome sequences of Chlamydia trachomatis MoPn and Chlamydia pneumoniae AR39.</title>
        <authorList>
            <person name="Read T.D."/>
            <person name="Brunham R.C."/>
            <person name="Shen C."/>
            <person name="Gill S.R."/>
            <person name="Heidelberg J.F."/>
            <person name="White O."/>
            <person name="Hickey E.K."/>
            <person name="Peterson J.D."/>
            <person name="Utterback T.R."/>
            <person name="Berry K.J."/>
            <person name="Bass S."/>
            <person name="Linher K.D."/>
            <person name="Weidman J.F."/>
            <person name="Khouri H.M."/>
            <person name="Craven B."/>
            <person name="Bowman C."/>
            <person name="Dodson R.J."/>
            <person name="Gwinn M.L."/>
            <person name="Nelson W.C."/>
            <person name="DeBoy R.T."/>
            <person name="Kolonay J.F."/>
            <person name="McClarty G."/>
            <person name="Salzberg S.L."/>
            <person name="Eisen J.A."/>
            <person name="Fraser C.M."/>
        </authorList>
    </citation>
    <scope>NUCLEOTIDE SEQUENCE [LARGE SCALE GENOMIC DNA]</scope>
    <source>
        <strain>MoPn / Nigg</strain>
    </source>
</reference>
<evidence type="ECO:0000250" key="1"/>
<evidence type="ECO:0000255" key="2"/>
<evidence type="ECO:0000305" key="3"/>
<proteinExistence type="inferred from homology"/>
<feature type="chain" id="PRO_0000090731" description="Phosphatidate cytidylyltransferase">
    <location>
        <begin position="1"/>
        <end position="305"/>
    </location>
</feature>
<feature type="transmembrane region" description="Helical" evidence="2">
    <location>
        <begin position="24"/>
        <end position="44"/>
    </location>
</feature>
<feature type="transmembrane region" description="Helical" evidence="2">
    <location>
        <begin position="97"/>
        <end position="117"/>
    </location>
</feature>
<feature type="transmembrane region" description="Helical" evidence="2">
    <location>
        <begin position="124"/>
        <end position="144"/>
    </location>
</feature>
<feature type="transmembrane region" description="Helical" evidence="2">
    <location>
        <begin position="151"/>
        <end position="171"/>
    </location>
</feature>
<feature type="transmembrane region" description="Helical" evidence="2">
    <location>
        <begin position="202"/>
        <end position="222"/>
    </location>
</feature>
<feature type="transmembrane region" description="Helical" evidence="2">
    <location>
        <begin position="232"/>
        <end position="252"/>
    </location>
</feature>
<feature type="transmembrane region" description="Helical" evidence="2">
    <location>
        <begin position="277"/>
        <end position="297"/>
    </location>
</feature>
<comment type="catalytic activity">
    <reaction>
        <text>a 1,2-diacyl-sn-glycero-3-phosphate + CTP + H(+) = a CDP-1,2-diacyl-sn-glycerol + diphosphate</text>
        <dbReference type="Rhea" id="RHEA:16229"/>
        <dbReference type="ChEBI" id="CHEBI:15378"/>
        <dbReference type="ChEBI" id="CHEBI:33019"/>
        <dbReference type="ChEBI" id="CHEBI:37563"/>
        <dbReference type="ChEBI" id="CHEBI:58332"/>
        <dbReference type="ChEBI" id="CHEBI:58608"/>
        <dbReference type="EC" id="2.7.7.41"/>
    </reaction>
</comment>
<comment type="pathway">
    <text>Phospholipid metabolism; CDP-diacylglycerol biosynthesis; CDP-diacylglycerol from sn-glycerol 3-phosphate: step 3/3.</text>
</comment>
<comment type="subcellular location">
    <subcellularLocation>
        <location evidence="1">Cell membrane</location>
        <topology evidence="1">Multi-pass membrane protein</topology>
    </subcellularLocation>
</comment>
<comment type="similarity">
    <text evidence="3">Belongs to the CDS family.</text>
</comment>
<name>CDSA_CHLMU</name>
<accession>Q9PJU1</accession>
<keyword id="KW-1003">Cell membrane</keyword>
<keyword id="KW-0444">Lipid biosynthesis</keyword>
<keyword id="KW-0443">Lipid metabolism</keyword>
<keyword id="KW-0472">Membrane</keyword>
<keyword id="KW-0548">Nucleotidyltransferase</keyword>
<keyword id="KW-0594">Phospholipid biosynthesis</keyword>
<keyword id="KW-1208">Phospholipid metabolism</keyword>
<keyword id="KW-0808">Transferase</keyword>
<keyword id="KW-0812">Transmembrane</keyword>
<keyword id="KW-1133">Transmembrane helix</keyword>
<protein>
    <recommendedName>
        <fullName>Phosphatidate cytidylyltransferase</fullName>
        <ecNumber>2.7.7.41</ecNumber>
    </recommendedName>
    <alternativeName>
        <fullName>CDP-DAG synthase</fullName>
    </alternativeName>
    <alternativeName>
        <fullName>CDP-DG synthase</fullName>
    </alternativeName>
    <alternativeName>
        <fullName>CDP-diacylglycerol synthase</fullName>
        <shortName>CDS</shortName>
    </alternativeName>
    <alternativeName>
        <fullName>CDP-diglyceride pyrophosphorylase</fullName>
    </alternativeName>
    <alternativeName>
        <fullName>CDP-diglyceride synthase</fullName>
    </alternativeName>
    <alternativeName>
        <fullName>CTP:phosphatidate cytidylyltransferase</fullName>
    </alternativeName>
</protein>
<dbReference type="EC" id="2.7.7.41"/>
<dbReference type="EMBL" id="AE002160">
    <property type="protein sequence ID" value="AAF39546.1"/>
    <property type="molecule type" value="Genomic_DNA"/>
</dbReference>
<dbReference type="PIR" id="D81670">
    <property type="entry name" value="D81670"/>
</dbReference>
<dbReference type="RefSeq" id="WP_010231379.1">
    <property type="nucleotide sequence ID" value="NZ_CP063055.1"/>
</dbReference>
<dbReference type="SMR" id="Q9PJU1"/>
<dbReference type="GeneID" id="1246099"/>
<dbReference type="KEGG" id="cmu:TC_0736"/>
<dbReference type="eggNOG" id="COG0575">
    <property type="taxonomic scope" value="Bacteria"/>
</dbReference>
<dbReference type="HOGENOM" id="CLU_037294_3_3_0"/>
<dbReference type="OrthoDB" id="9799199at2"/>
<dbReference type="UniPathway" id="UPA00557">
    <property type="reaction ID" value="UER00614"/>
</dbReference>
<dbReference type="Proteomes" id="UP000000800">
    <property type="component" value="Chromosome"/>
</dbReference>
<dbReference type="GO" id="GO:0005886">
    <property type="term" value="C:plasma membrane"/>
    <property type="evidence" value="ECO:0007669"/>
    <property type="project" value="UniProtKB-SubCell"/>
</dbReference>
<dbReference type="GO" id="GO:0004605">
    <property type="term" value="F:phosphatidate cytidylyltransferase activity"/>
    <property type="evidence" value="ECO:0007669"/>
    <property type="project" value="UniProtKB-EC"/>
</dbReference>
<dbReference type="GO" id="GO:0016024">
    <property type="term" value="P:CDP-diacylglycerol biosynthetic process"/>
    <property type="evidence" value="ECO:0007669"/>
    <property type="project" value="UniProtKB-UniPathway"/>
</dbReference>
<dbReference type="PANTHER" id="PTHR46382">
    <property type="entry name" value="PHOSPHATIDATE CYTIDYLYLTRANSFERASE"/>
    <property type="match status" value="1"/>
</dbReference>
<dbReference type="PANTHER" id="PTHR46382:SF1">
    <property type="entry name" value="PHOSPHATIDATE CYTIDYLYLTRANSFERASE"/>
    <property type="match status" value="1"/>
</dbReference>
<dbReference type="Pfam" id="PF01148">
    <property type="entry name" value="CTP_transf_1"/>
    <property type="match status" value="1"/>
</dbReference>
<gene>
    <name type="primary">cdsA</name>
    <name type="ordered locus">TC_0736</name>
</gene>